<gene>
    <name evidence="1" type="primary">rpsE</name>
    <name type="ordered locus">Bpro_0492</name>
</gene>
<name>RS5_POLSJ</name>
<reference key="1">
    <citation type="journal article" date="2008" name="Appl. Environ. Microbiol.">
        <title>The genome of Polaromonas sp. strain JS666: insights into the evolution of a hydrocarbon- and xenobiotic-degrading bacterium, and features of relevance to biotechnology.</title>
        <authorList>
            <person name="Mattes T.E."/>
            <person name="Alexander A.K."/>
            <person name="Richardson P.M."/>
            <person name="Munk A.C."/>
            <person name="Han C.S."/>
            <person name="Stothard P."/>
            <person name="Coleman N.V."/>
        </authorList>
    </citation>
    <scope>NUCLEOTIDE SEQUENCE [LARGE SCALE GENOMIC DNA]</scope>
    <source>
        <strain>JS666 / ATCC BAA-500</strain>
    </source>
</reference>
<comment type="function">
    <text evidence="1">With S4 and S12 plays an important role in translational accuracy.</text>
</comment>
<comment type="function">
    <text evidence="1">Located at the back of the 30S subunit body where it stabilizes the conformation of the head with respect to the body.</text>
</comment>
<comment type="subunit">
    <text evidence="1">Part of the 30S ribosomal subunit. Contacts proteins S4 and S8.</text>
</comment>
<comment type="domain">
    <text>The N-terminal domain interacts with the head of the 30S subunit; the C-terminal domain interacts with the body and contacts protein S4. The interaction surface between S4 and S5 is involved in control of translational fidelity.</text>
</comment>
<comment type="similarity">
    <text evidence="1">Belongs to the universal ribosomal protein uS5 family.</text>
</comment>
<keyword id="KW-1185">Reference proteome</keyword>
<keyword id="KW-0687">Ribonucleoprotein</keyword>
<keyword id="KW-0689">Ribosomal protein</keyword>
<keyword id="KW-0694">RNA-binding</keyword>
<keyword id="KW-0699">rRNA-binding</keyword>
<evidence type="ECO:0000255" key="1">
    <source>
        <dbReference type="HAMAP-Rule" id="MF_01307"/>
    </source>
</evidence>
<evidence type="ECO:0000305" key="2"/>
<organism>
    <name type="scientific">Polaromonas sp. (strain JS666 / ATCC BAA-500)</name>
    <dbReference type="NCBI Taxonomy" id="296591"/>
    <lineage>
        <taxon>Bacteria</taxon>
        <taxon>Pseudomonadati</taxon>
        <taxon>Pseudomonadota</taxon>
        <taxon>Betaproteobacteria</taxon>
        <taxon>Burkholderiales</taxon>
        <taxon>Comamonadaceae</taxon>
        <taxon>Polaromonas</taxon>
    </lineage>
</organism>
<proteinExistence type="inferred from homology"/>
<sequence length="172" mass="18067">MAKFQAKSQNDAPDDGLKEKMIAVNRVTKVVKGGRILGFAALTVVGDGDGRVGMGKGKSKEVPAAVQKAMEEARRNMTKVSLKNGTIHHNVFGHWGAANVMMAPAPKGTGIIAGGPMRAVFEVMGITDIVAKSHGSSNPYNMVRATMDALNNSTTASEIAAKRGKSVEEIFG</sequence>
<feature type="chain" id="PRO_0000323169" description="Small ribosomal subunit protein uS5">
    <location>
        <begin position="1"/>
        <end position="172"/>
    </location>
</feature>
<feature type="domain" description="S5 DRBM" evidence="1">
    <location>
        <begin position="17"/>
        <end position="80"/>
    </location>
</feature>
<dbReference type="EMBL" id="CP000316">
    <property type="protein sequence ID" value="ABE42456.1"/>
    <property type="molecule type" value="Genomic_DNA"/>
</dbReference>
<dbReference type="RefSeq" id="WP_011481461.1">
    <property type="nucleotide sequence ID" value="NC_007948.1"/>
</dbReference>
<dbReference type="SMR" id="Q12G86"/>
<dbReference type="STRING" id="296591.Bpro_0492"/>
<dbReference type="KEGG" id="pol:Bpro_0492"/>
<dbReference type="eggNOG" id="COG0098">
    <property type="taxonomic scope" value="Bacteria"/>
</dbReference>
<dbReference type="HOGENOM" id="CLU_065898_2_2_4"/>
<dbReference type="OrthoDB" id="9809045at2"/>
<dbReference type="Proteomes" id="UP000001983">
    <property type="component" value="Chromosome"/>
</dbReference>
<dbReference type="GO" id="GO:0015935">
    <property type="term" value="C:small ribosomal subunit"/>
    <property type="evidence" value="ECO:0007669"/>
    <property type="project" value="InterPro"/>
</dbReference>
<dbReference type="GO" id="GO:0019843">
    <property type="term" value="F:rRNA binding"/>
    <property type="evidence" value="ECO:0007669"/>
    <property type="project" value="UniProtKB-UniRule"/>
</dbReference>
<dbReference type="GO" id="GO:0003735">
    <property type="term" value="F:structural constituent of ribosome"/>
    <property type="evidence" value="ECO:0007669"/>
    <property type="project" value="InterPro"/>
</dbReference>
<dbReference type="GO" id="GO:0006412">
    <property type="term" value="P:translation"/>
    <property type="evidence" value="ECO:0007669"/>
    <property type="project" value="UniProtKB-UniRule"/>
</dbReference>
<dbReference type="FunFam" id="3.30.160.20:FF:000001">
    <property type="entry name" value="30S ribosomal protein S5"/>
    <property type="match status" value="1"/>
</dbReference>
<dbReference type="FunFam" id="3.30.230.10:FF:000002">
    <property type="entry name" value="30S ribosomal protein S5"/>
    <property type="match status" value="1"/>
</dbReference>
<dbReference type="Gene3D" id="3.30.160.20">
    <property type="match status" value="1"/>
</dbReference>
<dbReference type="Gene3D" id="3.30.230.10">
    <property type="match status" value="1"/>
</dbReference>
<dbReference type="HAMAP" id="MF_01307_B">
    <property type="entry name" value="Ribosomal_uS5_B"/>
    <property type="match status" value="1"/>
</dbReference>
<dbReference type="InterPro" id="IPR020568">
    <property type="entry name" value="Ribosomal_Su5_D2-typ_SF"/>
</dbReference>
<dbReference type="InterPro" id="IPR000851">
    <property type="entry name" value="Ribosomal_uS5"/>
</dbReference>
<dbReference type="InterPro" id="IPR005712">
    <property type="entry name" value="Ribosomal_uS5_bac-type"/>
</dbReference>
<dbReference type="InterPro" id="IPR005324">
    <property type="entry name" value="Ribosomal_uS5_C"/>
</dbReference>
<dbReference type="InterPro" id="IPR013810">
    <property type="entry name" value="Ribosomal_uS5_N"/>
</dbReference>
<dbReference type="InterPro" id="IPR018192">
    <property type="entry name" value="Ribosomal_uS5_N_CS"/>
</dbReference>
<dbReference type="InterPro" id="IPR014721">
    <property type="entry name" value="Ribsml_uS5_D2-typ_fold_subgr"/>
</dbReference>
<dbReference type="NCBIfam" id="TIGR01021">
    <property type="entry name" value="rpsE_bact"/>
    <property type="match status" value="1"/>
</dbReference>
<dbReference type="PANTHER" id="PTHR48277">
    <property type="entry name" value="MITOCHONDRIAL RIBOSOMAL PROTEIN S5"/>
    <property type="match status" value="1"/>
</dbReference>
<dbReference type="PANTHER" id="PTHR48277:SF1">
    <property type="entry name" value="MITOCHONDRIAL RIBOSOMAL PROTEIN S5"/>
    <property type="match status" value="1"/>
</dbReference>
<dbReference type="Pfam" id="PF00333">
    <property type="entry name" value="Ribosomal_S5"/>
    <property type="match status" value="1"/>
</dbReference>
<dbReference type="Pfam" id="PF03719">
    <property type="entry name" value="Ribosomal_S5_C"/>
    <property type="match status" value="1"/>
</dbReference>
<dbReference type="SUPFAM" id="SSF54768">
    <property type="entry name" value="dsRNA-binding domain-like"/>
    <property type="match status" value="1"/>
</dbReference>
<dbReference type="SUPFAM" id="SSF54211">
    <property type="entry name" value="Ribosomal protein S5 domain 2-like"/>
    <property type="match status" value="1"/>
</dbReference>
<dbReference type="PROSITE" id="PS00585">
    <property type="entry name" value="RIBOSOMAL_S5"/>
    <property type="match status" value="1"/>
</dbReference>
<dbReference type="PROSITE" id="PS50881">
    <property type="entry name" value="S5_DSRBD"/>
    <property type="match status" value="1"/>
</dbReference>
<accession>Q12G86</accession>
<protein>
    <recommendedName>
        <fullName evidence="1">Small ribosomal subunit protein uS5</fullName>
    </recommendedName>
    <alternativeName>
        <fullName evidence="2">30S ribosomal protein S5</fullName>
    </alternativeName>
</protein>